<proteinExistence type="evidence at protein level"/>
<reference key="1">
    <citation type="journal article" date="2005" name="J. Biol. Chem.">
        <title>Proteomic analysis of rhoptry organelles reveals many novel constituents for host-parasite interactions in Toxoplasma gondii.</title>
        <authorList>
            <person name="Bradley P.J."/>
            <person name="Ward C."/>
            <person name="Cheng S.J."/>
            <person name="Alexander D.L."/>
            <person name="Coller S."/>
            <person name="Coombs G.H."/>
            <person name="Dunn J.D."/>
            <person name="Ferguson D.J."/>
            <person name="Sanderson S.J."/>
            <person name="Wastling J.M."/>
            <person name="Boothroyd J.C."/>
        </authorList>
    </citation>
    <scope>NUCLEOTIDE SEQUENCE [MRNA] (ISOFORM 2)</scope>
    <scope>SUBCELLULAR LOCATION</scope>
    <scope>IDENTIFICATION BY MASS SPECTROMETRY</scope>
    <source>
        <strain>RH</strain>
    </source>
</reference>
<reference key="2">
    <citation type="journal article" date="2011" name="PLoS Pathog.">
        <title>The RON2-AMA1 interaction is a critical step in moving junction-dependent invasion by apicomplexan parasites.</title>
        <authorList>
            <person name="Lamarque M."/>
            <person name="Besteiro S."/>
            <person name="Papoin J."/>
            <person name="Roques M."/>
            <person name="Vulliez-Le Normand B."/>
            <person name="Morlon-Guyot J."/>
            <person name="Dubremetz J.F."/>
            <person name="Fauquenoy S."/>
            <person name="Tomavo S."/>
            <person name="Faber B.W."/>
            <person name="Kocken C.H."/>
            <person name="Thomas A.W."/>
            <person name="Boulanger M.J."/>
            <person name="Bentley G.A."/>
            <person name="Lebrun M."/>
        </authorList>
    </citation>
    <scope>NUCLEOTIDE SEQUENCE [MRNA] (ISOFORM 1)</scope>
    <scope>FUNCTION</scope>
    <scope>INTERACTION WITH AMA1</scope>
    <scope>SUBCELLULAR LOCATION</scope>
    <scope>TOPOLOGY</scope>
    <source>
        <strain>RH</strain>
    </source>
</reference>
<reference key="3">
    <citation type="submission" date="2013-04" db="EMBL/GenBank/DDBJ databases">
        <authorList>
            <person name="Sibley D."/>
            <person name="Venepally P."/>
            <person name="Karamycheva S."/>
            <person name="Hadjithomas M."/>
            <person name="Khan A."/>
            <person name="Brunk B."/>
            <person name="Roos D."/>
            <person name="Caler E."/>
            <person name="Lorenzi H."/>
        </authorList>
    </citation>
    <scope>NUCLEOTIDE SEQUENCE [LARGE SCALE GENOMIC DNA]</scope>
    <source>
        <strain>ATCC 50611 / Me49</strain>
    </source>
</reference>
<reference key="4">
    <citation type="journal article" date="2005" name="Cell. Microbiol.">
        <title>The rhoptry neck protein RON4 re-localizes at the moving junction during Toxoplasma gondii invasion.</title>
        <authorList>
            <person name="Lebrun M."/>
            <person name="Michelin A."/>
            <person name="El Hajj H."/>
            <person name="Poncet J."/>
            <person name="Bradley P.J."/>
            <person name="Vial H."/>
            <person name="Dubremetz J.F."/>
        </authorList>
    </citation>
    <scope>IDENTIFICATION BY MASS SPECTROMETRY</scope>
</reference>
<reference key="5">
    <citation type="journal article" date="2005" name="PLoS Pathog.">
        <title>Identification of the moving junction complex of Toxoplasma gondii: a collaboration between distinct secretory organelles.</title>
        <authorList>
            <person name="Alexander D.L."/>
            <person name="Mital J."/>
            <person name="Ward G.E."/>
            <person name="Bradley P."/>
            <person name="Boothroyd J.C."/>
        </authorList>
    </citation>
    <scope>FUNCTION</scope>
    <scope>INTERACTION WITH AMA1</scope>
    <scope>SUBCELLULAR LOCATION</scope>
</reference>
<reference key="6">
    <citation type="journal article" date="2009" name="PLoS Pathog.">
        <title>Export of a Toxoplasma gondii rhoptry neck protein complex at the host cell membrane to form the moving junction during invasion.</title>
        <authorList>
            <person name="Besteiro S."/>
            <person name="Michelin A."/>
            <person name="Poncet J."/>
            <person name="Dubremetz J.F."/>
            <person name="Lebrun M."/>
        </authorList>
    </citation>
    <scope>FUNCTION</scope>
    <scope>IDENTIFICATION IN THE MJ COMPLEX</scope>
    <scope>INTERACTION WITH AMA1</scope>
    <scope>SUBCELLULAR LOCATION</scope>
</reference>
<reference key="7">
    <citation type="journal article" date="2011" name="PLoS Pathog.">
        <title>The C-terminus of Toxoplasma RON2 provides the crucial link between AMA1 and the host-associated invasion complex.</title>
        <authorList>
            <person name="Tyler J.S."/>
            <person name="Boothroyd J.C."/>
        </authorList>
    </citation>
    <scope>FUNCTION</scope>
    <scope>INTERACTION WITH AMA1</scope>
    <scope>TOPOLOGY</scope>
</reference>
<reference key="8">
    <citation type="journal article" date="2011" name="Science">
        <title>Host cell invasion by apicomplexan parasites: insights from the co-structure of AMA1 with a RON2 peptide.</title>
        <authorList>
            <person name="Tonkin M.L."/>
            <person name="Roques M."/>
            <person name="Lamarque M.H."/>
            <person name="Pugniere M."/>
            <person name="Douguet D."/>
            <person name="Crawford J."/>
            <person name="Lebrun M."/>
            <person name="Boulanger M.J."/>
        </authorList>
    </citation>
    <scope>X-RAY CRYSTALLOGRAPHY (1.95 ANGSTROMS) OF 1297-1333 IN COMPLEX WITH AMA1</scope>
    <scope>DISULFIDE BOND</scope>
    <scope>MUTAGENESIS OF ASP-1297; ASP-1304; PRO-1309; CYS-1313; LEU-1319 AND CYS-1323</scope>
</reference>
<keyword id="KW-0002">3D-structure</keyword>
<keyword id="KW-0025">Alternative splicing</keyword>
<keyword id="KW-0963">Cytoplasm</keyword>
<keyword id="KW-1015">Disulfide bond</keyword>
<keyword id="KW-1032">Host cell membrane</keyword>
<keyword id="KW-1043">Host membrane</keyword>
<keyword id="KW-0472">Membrane</keyword>
<keyword id="KW-1185">Reference proteome</keyword>
<keyword id="KW-0964">Secreted</keyword>
<keyword id="KW-0732">Signal</keyword>
<keyword id="KW-1137">Tachyzoite</keyword>
<keyword id="KW-0812">Transmembrane</keyword>
<keyword id="KW-1133">Transmembrane helix</keyword>
<protein>
    <recommendedName>
        <fullName>Rhoptry neck protein 2</fullName>
    </recommendedName>
    <alternativeName>
        <fullName>145 kDa AMA1-associated protein</fullName>
        <shortName>AAP145</shortName>
    </alternativeName>
</protein>
<organism>
    <name type="scientific">Toxoplasma gondii (strain ATCC 50611 / Me49)</name>
    <dbReference type="NCBI Taxonomy" id="508771"/>
    <lineage>
        <taxon>Eukaryota</taxon>
        <taxon>Sar</taxon>
        <taxon>Alveolata</taxon>
        <taxon>Apicomplexa</taxon>
        <taxon>Conoidasida</taxon>
        <taxon>Coccidia</taxon>
        <taxon>Eucoccidiorida</taxon>
        <taxon>Eimeriorina</taxon>
        <taxon>Sarcocystidae</taxon>
        <taxon>Toxoplasma</taxon>
    </lineage>
</organism>
<comment type="function">
    <text evidence="4 5 6 7">Essential rhoptry neck protein that plays an important role in host cell invasion. Upon host invasion by tachyzoites, the protein is injected into the host cell where it functions as a receptor for apical membrane antigen 1 (AMA1) on the parasite. Part of the moving junction (MJ) complex, a ringlike structure formed between the plasma membranes of the apical tip of the parasite and the target host cell. During invasion, the MJ migrates from the anterior to the posterior of the parasite, leading to internalization of the parasite into a parasitophorous vacuole (PV).</text>
</comment>
<comment type="subunit">
    <text evidence="4 5 6 7 8">Component of the moving junction (MJ) complex, composed of AMA1, a transmembrane protein on the parasite surface, and a complex of the rhoptry neck proteins RON2, RON4, RON5 and RON8 localized to the cytoplasmic face of the host plasma membrane. Interacts (via C-terminus) with AMA1 (via ectodomain); RON2 serves as the receptor for AMA1 on the host plasma membrane. AMA1 and the RON proteins are initially in distinct compartments within the parasite, namely the micronemes and the rhoptries, and interaction happens only upon initiation of invasion when the micronemes and rhoptries discharge.</text>
</comment>
<comment type="subcellular location">
    <subcellularLocation>
        <location evidence="6">Secreted</location>
    </subcellularLocation>
    <subcellularLocation>
        <location evidence="6">Cytoplasm</location>
    </subcellularLocation>
    <subcellularLocation>
        <location evidence="4 5 6">Host cell membrane</location>
        <topology evidence="10">Single-pass type I membrane protein</topology>
        <orientation evidence="6">Cytoplasmic side</orientation>
    </subcellularLocation>
    <text evidence="3 4 6">Initially localizes to rhoptries, specialized secretory organelles of apicomplexan parasites important for host cell invasion (PubMed:16002398, PubMed:16244709). Upon host invasion by tachyzoites, the protein is injected into the host cell, where it spans the host cell membrane (PubMed:21347343).</text>
</comment>
<comment type="alternative products">
    <event type="alternative splicing"/>
    <isoform>
        <id>B6KV60-1</id>
        <name>1</name>
        <sequence type="displayed"/>
    </isoform>
    <isoform>
        <id>B6KV60-2</id>
        <name>2</name>
        <sequence type="described" ref="VSP_046510 VSP_046511"/>
    </isoform>
</comment>
<comment type="similarity">
    <text evidence="10">Belongs to the apicomplexan parasites RON2 family.</text>
</comment>
<dbReference type="EMBL" id="DQ096563">
    <property type="protein sequence ID" value="AAZ38163.1"/>
    <property type="molecule type" value="mRNA"/>
</dbReference>
<dbReference type="EMBL" id="HQ110093">
    <property type="protein sequence ID" value="ADN06068.1"/>
    <property type="molecule type" value="mRNA"/>
</dbReference>
<dbReference type="EMBL" id="KE138839">
    <property type="protein sequence ID" value="EPT25468.1"/>
    <property type="molecule type" value="Genomic_DNA"/>
</dbReference>
<dbReference type="RefSeq" id="XP_018635197.1">
    <molecule id="B6KV60-1"/>
    <property type="nucleotide sequence ID" value="XM_018782383.1"/>
</dbReference>
<dbReference type="PDB" id="2Y8S">
    <property type="method" value="X-ray"/>
    <property type="resolution" value="2.55 A"/>
    <property type="chains" value="B/E=1297-1333"/>
</dbReference>
<dbReference type="PDB" id="2Y8T">
    <property type="method" value="X-ray"/>
    <property type="resolution" value="1.95 A"/>
    <property type="chains" value="B/E=1297-1332"/>
</dbReference>
<dbReference type="PDBsum" id="2Y8S"/>
<dbReference type="PDBsum" id="2Y8T"/>
<dbReference type="SMR" id="B6KV60"/>
<dbReference type="EnsemblProtists" id="TGME49_300100-t26_1">
    <molecule id="B6KV60-1"/>
    <property type="protein sequence ID" value="TGME49_300100-t26_1"/>
    <property type="gene ID" value="TGME49_300100"/>
</dbReference>
<dbReference type="GeneID" id="7895166"/>
<dbReference type="KEGG" id="tgo:TGME49_300100"/>
<dbReference type="VEuPathDB" id="ToxoDB:TGME49_300100"/>
<dbReference type="HOGENOM" id="CLU_254159_0_0_1"/>
<dbReference type="OrthoDB" id="345453at2759"/>
<dbReference type="PhylomeDB" id="B6KV60"/>
<dbReference type="Proteomes" id="UP000001529">
    <property type="component" value="Chromosome XII"/>
</dbReference>
<dbReference type="GO" id="GO:0005737">
    <property type="term" value="C:cytoplasm"/>
    <property type="evidence" value="ECO:0007669"/>
    <property type="project" value="UniProtKB-SubCell"/>
</dbReference>
<dbReference type="GO" id="GO:0005576">
    <property type="term" value="C:extracellular region"/>
    <property type="evidence" value="ECO:0007669"/>
    <property type="project" value="UniProtKB-SubCell"/>
</dbReference>
<dbReference type="GO" id="GO:0020002">
    <property type="term" value="C:host cell plasma membrane"/>
    <property type="evidence" value="ECO:0007669"/>
    <property type="project" value="UniProtKB-SubCell"/>
</dbReference>
<dbReference type="GO" id="GO:0016020">
    <property type="term" value="C:membrane"/>
    <property type="evidence" value="ECO:0007669"/>
    <property type="project" value="UniProtKB-KW"/>
</dbReference>
<feature type="signal peptide" evidence="1">
    <location>
        <begin position="1"/>
        <end position="24"/>
    </location>
</feature>
<feature type="chain" id="PRO_0000422339" description="Rhoptry neck protein 2">
    <location>
        <begin position="25"/>
        <end position="1479"/>
    </location>
</feature>
<feature type="topological domain" description="Cytoplasmic" evidence="1">
    <location>
        <begin position="25"/>
        <end position="1277"/>
    </location>
</feature>
<feature type="transmembrane region" description="Helical" evidence="1">
    <location>
        <begin position="1278"/>
        <end position="1298"/>
    </location>
</feature>
<feature type="topological domain" description="Extracellular" evidence="1">
    <location>
        <begin position="1299"/>
        <end position="1479"/>
    </location>
</feature>
<feature type="region of interest" description="Disordered" evidence="2">
    <location>
        <begin position="49"/>
        <end position="68"/>
    </location>
</feature>
<feature type="region of interest" description="Disordered" evidence="2">
    <location>
        <begin position="291"/>
        <end position="316"/>
    </location>
</feature>
<feature type="region of interest" description="Interaction with AMA1">
    <location>
        <begin position="1297"/>
        <end position="1333"/>
    </location>
</feature>
<feature type="region of interest" description="Disordered" evidence="2">
    <location>
        <begin position="1419"/>
        <end position="1445"/>
    </location>
</feature>
<feature type="disulfide bond" evidence="8">
    <location>
        <begin position="1313"/>
        <end position="1323"/>
    </location>
</feature>
<feature type="splice variant" id="VSP_046510" description="In isoform 2." evidence="9">
    <location>
        <begin position="246"/>
        <end position="276"/>
    </location>
</feature>
<feature type="splice variant" id="VSP_046511" description="In isoform 2." evidence="9">
    <original>TIGHVLTLMIAYLDYESFFGASPSKPFHSWVSLAASAGNNTGFAMLDEMCDNHRGPKRRGQKHWYQTGGARKHKNRDMLPLHRQLCDALELVLNGVQQI</original>
    <variation>SKEVAAWLTSNDARLGCGNRSEYPIDLRVSAV</variation>
    <location>
        <begin position="406"/>
        <end position="504"/>
    </location>
</feature>
<feature type="mutagenesis site" description="Impairs interaction with AMA1." evidence="8">
    <original>D</original>
    <variation>A</variation>
    <location>
        <position position="1297"/>
    </location>
</feature>
<feature type="mutagenesis site" description="Impairs interaction with AMA1." evidence="8">
    <original>D</original>
    <variation>A</variation>
    <location>
        <position position="1304"/>
    </location>
</feature>
<feature type="mutagenesis site" description="Impairs interaction with AMA1." evidence="8">
    <original>P</original>
    <variation>A</variation>
    <location>
        <position position="1309"/>
    </location>
</feature>
<feature type="mutagenesis site" description="Impairs interaction with AMA1 and inhibits host cell invasion." evidence="8">
    <original>C</original>
    <variation>A</variation>
    <location>
        <position position="1313"/>
    </location>
</feature>
<feature type="mutagenesis site" description="Impairs interaction with AMA1." evidence="8">
    <original>L</original>
    <variation>A</variation>
    <location>
        <position position="1319"/>
    </location>
</feature>
<feature type="mutagenesis site" description="Impairs interaction with AMA1 and inhibits host cell invasion." evidence="8">
    <original>C</original>
    <variation>A</variation>
    <location>
        <position position="1323"/>
    </location>
</feature>
<feature type="helix" evidence="11">
    <location>
        <begin position="1298"/>
        <end position="1304"/>
    </location>
</feature>
<feature type="strand" evidence="11">
    <location>
        <begin position="1312"/>
        <end position="1316"/>
    </location>
</feature>
<feature type="turn" evidence="11">
    <location>
        <begin position="1317"/>
        <end position="1319"/>
    </location>
</feature>
<feature type="strand" evidence="11">
    <location>
        <begin position="1320"/>
        <end position="1323"/>
    </location>
</feature>
<feature type="turn" evidence="11">
    <location>
        <begin position="1330"/>
        <end position="1332"/>
    </location>
</feature>
<accession>B6KV60</accession>
<accession>F6KDI4</accession>
<accession>Q45WA8</accession>
<accession>S8EWN0</accession>
<name>RON2_TOXGM</name>
<gene>
    <name type="primary">RON2</name>
    <name type="ORF">TGME49_100100</name>
    <name type="ORF">TGME49_300100</name>
</gene>
<sequence>MTKRAGLPLGRAFLVLILLSAADSLFFSSFPRSALQLFSSVLFTDAAEPDSDATPGLRPQPSPRTFRPTGYQRIEVKTVDEELPEDLKVYTASTRGSSSRTFEVRNAGGRQEGFTLSVLTAGGPLPHGSWSWSGTPPEVQTTGGSQISFGWVPDTETPSLPERNLLQLKRMLRDEGLIEAVQLRAAEKGCPVAVLHNLRQLPVNFREVLHEEYESRSNPAKMYEVANSYVQQRGSDAARWSVSQSVELSLLEMHATSTTDPRGSSAVPSFLETGPQVRVAMTDAVPSGIRVYATPPAPRPVPVQSNQTEKERSPTSKRLVGMQLGLYLICKLAALFGHPTLFLNPYYTEQQLLEAVAQALGIAPPHRGDFENEGNEAQATANQHNGSADQLLAAIEIFRLGPNPYTIGHVLTLMIAYLDYESFFGASPSKPFHSWVSLAASAGNNTGFAMLDEMCDNHRGPKRRGQKHWYQTGGARKHKNRDMLPLHRQLCDALELVLNGVQQIQIDLMDELGKYKTGVEPLVDPATNSARIHTRTCRGLSPVCDYEATILAPVRALEPHEQQDSLRTKKAFNLVTGYGSGHVGQITGSIAEPFSHSWRTRWGKVVADPTAYGEIFERTLWFDDRELMAKSSGALFRQYDRIAKDSMSFGVFMNVENGLLKKDMRSKLEAYISQRKSFVEKRQQSRFAKLRKKIPENDPYALRAAIFLALNSRTFCAQPTSFLSSFRTFLTNQYHKLSQGRNLPRSQRSLMAFMRTGQVKFFQEWCSFDPLAVNALFLFRFAVSGTDPAALHDRQHTRVSRNKKTMRILNSKWTPAVLKKLMRKVNHKHMAREAKALLLRSLDPTVLSSIVTAFDFITHTQANLEVNQNAFMYHEVRAREVSRQSAAEKGSHRLHERGLVRETDDMIKRWAEHGIPGDIKRRLARGEKLPEGMSFGGIPIPNLTNWDAQLNSKWLEAYNAYLRHPYGRAALNARDPVALLVKDSRDRLQAEAEGTIFLGRIAKRVHQSKNLLRRAGRALKTFFLSLLRENERSEYAVWFGVKVDMRQVIQTCRQINSVAEVVKNDRLYDFITDGWMELVKDVVAGYTKASVRVPGFDTISAANEQLRKEGVAAATARNQGFLSIHYDYANLPEEERKKEFQRSMCMEQCEALWKLVMAFVMPNLQNPKKLKGYEKDFSGAKEIEKLNSPHHVNAFRFSLSVQIDFFDNMLDKTSKKNLKAMKFGASTWFTYAMKLAGQVNSEMGNPNLGTALYMQAAYYGNYIRKWMEQRRKSRKQAIIGVLTLGMMGLYALLNVADIVQHMEDIGGAPPVSCVTNEILGVTCAPQAIAKATTSAARVATQDFLKVGLFAGMAPYLMLPMAVVSVWNILKSEIKVLLQFEMALKHTFTRLKRWLAAPFKNWWAKRGRLKDALFRRASQTYRKTEQETKQPPRPRNLHNPSSWGDTELDSLGVPPEPFVQDFEIKYTTPVFPMSAPLIKA</sequence>
<evidence type="ECO:0000255" key="1"/>
<evidence type="ECO:0000256" key="2">
    <source>
        <dbReference type="SAM" id="MobiDB-lite"/>
    </source>
</evidence>
<evidence type="ECO:0000269" key="3">
    <source>
    </source>
</evidence>
<evidence type="ECO:0000269" key="4">
    <source>
    </source>
</evidence>
<evidence type="ECO:0000269" key="5">
    <source>
    </source>
</evidence>
<evidence type="ECO:0000269" key="6">
    <source>
    </source>
</evidence>
<evidence type="ECO:0000269" key="7">
    <source>
    </source>
</evidence>
<evidence type="ECO:0000269" key="8">
    <source>
    </source>
</evidence>
<evidence type="ECO:0000303" key="9">
    <source>
    </source>
</evidence>
<evidence type="ECO:0000305" key="10"/>
<evidence type="ECO:0007829" key="11">
    <source>
        <dbReference type="PDB" id="2Y8T"/>
    </source>
</evidence>